<protein>
    <recommendedName>
        <fullName evidence="1">Biosynthetic arginine decarboxylase</fullName>
        <shortName evidence="1">ADC</shortName>
        <ecNumber evidence="1">4.1.1.19</ecNumber>
    </recommendedName>
</protein>
<accession>Q9PH02</accession>
<reference key="1">
    <citation type="journal article" date="2000" name="Nature">
        <title>The genome sequence of the plant pathogen Xylella fastidiosa.</title>
        <authorList>
            <person name="Simpson A.J.G."/>
            <person name="Reinach F.C."/>
            <person name="Arruda P."/>
            <person name="Abreu F.A."/>
            <person name="Acencio M."/>
            <person name="Alvarenga R."/>
            <person name="Alves L.M.C."/>
            <person name="Araya J.E."/>
            <person name="Baia G.S."/>
            <person name="Baptista C.S."/>
            <person name="Barros M.H."/>
            <person name="Bonaccorsi E.D."/>
            <person name="Bordin S."/>
            <person name="Bove J.M."/>
            <person name="Briones M.R.S."/>
            <person name="Bueno M.R.P."/>
            <person name="Camargo A.A."/>
            <person name="Camargo L.E.A."/>
            <person name="Carraro D.M."/>
            <person name="Carrer H."/>
            <person name="Colauto N.B."/>
            <person name="Colombo C."/>
            <person name="Costa F.F."/>
            <person name="Costa M.C.R."/>
            <person name="Costa-Neto C.M."/>
            <person name="Coutinho L.L."/>
            <person name="Cristofani M."/>
            <person name="Dias-Neto E."/>
            <person name="Docena C."/>
            <person name="El-Dorry H."/>
            <person name="Facincani A.P."/>
            <person name="Ferreira A.J.S."/>
            <person name="Ferreira V.C.A."/>
            <person name="Ferro J.A."/>
            <person name="Fraga J.S."/>
            <person name="Franca S.C."/>
            <person name="Franco M.C."/>
            <person name="Frohme M."/>
            <person name="Furlan L.R."/>
            <person name="Garnier M."/>
            <person name="Goldman G.H."/>
            <person name="Goldman M.H.S."/>
            <person name="Gomes S.L."/>
            <person name="Gruber A."/>
            <person name="Ho P.L."/>
            <person name="Hoheisel J.D."/>
            <person name="Junqueira M.L."/>
            <person name="Kemper E.L."/>
            <person name="Kitajima J.P."/>
            <person name="Krieger J.E."/>
            <person name="Kuramae E.E."/>
            <person name="Laigret F."/>
            <person name="Lambais M.R."/>
            <person name="Leite L.C.C."/>
            <person name="Lemos E.G.M."/>
            <person name="Lemos M.V.F."/>
            <person name="Lopes S.A."/>
            <person name="Lopes C.R."/>
            <person name="Machado J.A."/>
            <person name="Machado M.A."/>
            <person name="Madeira A.M.B.N."/>
            <person name="Madeira H.M.F."/>
            <person name="Marino C.L."/>
            <person name="Marques M.V."/>
            <person name="Martins E.A.L."/>
            <person name="Martins E.M.F."/>
            <person name="Matsukuma A.Y."/>
            <person name="Menck C.F.M."/>
            <person name="Miracca E.C."/>
            <person name="Miyaki C.Y."/>
            <person name="Monteiro-Vitorello C.B."/>
            <person name="Moon D.H."/>
            <person name="Nagai M.A."/>
            <person name="Nascimento A.L.T.O."/>
            <person name="Netto L.E.S."/>
            <person name="Nhani A. Jr."/>
            <person name="Nobrega F.G."/>
            <person name="Nunes L.R."/>
            <person name="Oliveira M.A."/>
            <person name="de Oliveira M.C."/>
            <person name="de Oliveira R.C."/>
            <person name="Palmieri D.A."/>
            <person name="Paris A."/>
            <person name="Peixoto B.R."/>
            <person name="Pereira G.A.G."/>
            <person name="Pereira H.A. Jr."/>
            <person name="Pesquero J.B."/>
            <person name="Quaggio R.B."/>
            <person name="Roberto P.G."/>
            <person name="Rodrigues V."/>
            <person name="de Rosa A.J.M."/>
            <person name="de Rosa V.E. Jr."/>
            <person name="de Sa R.G."/>
            <person name="Santelli R.V."/>
            <person name="Sawasaki H.E."/>
            <person name="da Silva A.C.R."/>
            <person name="da Silva A.M."/>
            <person name="da Silva F.R."/>
            <person name="Silva W.A. Jr."/>
            <person name="da Silveira J.F."/>
            <person name="Silvestri M.L.Z."/>
            <person name="Siqueira W.J."/>
            <person name="de Souza A.A."/>
            <person name="de Souza A.P."/>
            <person name="Terenzi M.F."/>
            <person name="Truffi D."/>
            <person name="Tsai S.M."/>
            <person name="Tsuhako M.H."/>
            <person name="Vallada H."/>
            <person name="Van Sluys M.A."/>
            <person name="Verjovski-Almeida S."/>
            <person name="Vettore A.L."/>
            <person name="Zago M.A."/>
            <person name="Zatz M."/>
            <person name="Meidanis J."/>
            <person name="Setubal J.C."/>
        </authorList>
    </citation>
    <scope>NUCLEOTIDE SEQUENCE [LARGE SCALE GENOMIC DNA]</scope>
    <source>
        <strain>9a5c</strain>
    </source>
</reference>
<comment type="function">
    <text evidence="1">Catalyzes the biosynthesis of agmatine from arginine.</text>
</comment>
<comment type="catalytic activity">
    <reaction evidence="1">
        <text>L-arginine + H(+) = agmatine + CO2</text>
        <dbReference type="Rhea" id="RHEA:17641"/>
        <dbReference type="ChEBI" id="CHEBI:15378"/>
        <dbReference type="ChEBI" id="CHEBI:16526"/>
        <dbReference type="ChEBI" id="CHEBI:32682"/>
        <dbReference type="ChEBI" id="CHEBI:58145"/>
        <dbReference type="EC" id="4.1.1.19"/>
    </reaction>
</comment>
<comment type="cofactor">
    <cofactor evidence="1">
        <name>Mg(2+)</name>
        <dbReference type="ChEBI" id="CHEBI:18420"/>
    </cofactor>
</comment>
<comment type="cofactor">
    <cofactor evidence="1">
        <name>pyridoxal 5'-phosphate</name>
        <dbReference type="ChEBI" id="CHEBI:597326"/>
    </cofactor>
</comment>
<comment type="similarity">
    <text evidence="1">Belongs to the Orn/Lys/Arg decarboxylase class-II family. SpeA subfamily.</text>
</comment>
<proteinExistence type="inferred from homology"/>
<sequence length="628" mass="69191">MTWSQDLAHKTYSILHWADGYFEVNDAGQMVVMPVGRDGVRISLPEVVDAARAAGAKLPLLLRFPDILGHRLGKLQAAFAQAQSEWEYAGGYTAVYPIKVNQHRGVAGVLASHQGDGFGLEAGSKPELMAVLALSRPGGLIVCNGYKDREYIRLALIGRKLGLKTFIVIEKPSELRMVLEEAKTLGVLPGLGVRVRLASLGAGKWQNSGGDKAKFGLSPRQVLDVWKVLRGTEYADCLNVMHFHMGSQISNVRDIAKGMREATRYFVELSRLGAKITHVDVGGGLGIDYEGTRSRSDCSINYGLQAYASHIVQPLASACEDYDLVPPRIVTECGRAMTAHHAVLIANVTEVEAVPEGRVPGVCDDEPAVVRHMREIYGELDARPAIELFYEAQHFHAEGLAAYTLGQIDLVHRARIDDLFYAISHGVRERLSHEEKSHRPVLDELNERLVDKYFVNFSVFESIPDVWAINQIFPIVPIERLNEAPTRRGVVCDLTCDSDGTVKQYVENESLDSALPLHVLRHGEAYRIGFFLVGAYQEILGDIHNLFGDTDAVEVAVDGRGYRIAQQRCGDTTDVMLDYVGYALDEVRRVYAQRITAAGMSAAESKALSDMLEAGLTGYPYLSDVPLE</sequence>
<keyword id="KW-0210">Decarboxylase</keyword>
<keyword id="KW-0456">Lyase</keyword>
<keyword id="KW-0460">Magnesium</keyword>
<keyword id="KW-0479">Metal-binding</keyword>
<keyword id="KW-0620">Polyamine biosynthesis</keyword>
<keyword id="KW-0663">Pyridoxal phosphate</keyword>
<keyword id="KW-0745">Spermidine biosynthesis</keyword>
<dbReference type="EC" id="4.1.1.19" evidence="1"/>
<dbReference type="EMBL" id="AE003849">
    <property type="protein sequence ID" value="AAF82957.1"/>
    <property type="molecule type" value="Genomic_DNA"/>
</dbReference>
<dbReference type="PIR" id="C82842">
    <property type="entry name" value="C82842"/>
</dbReference>
<dbReference type="RefSeq" id="WP_010892689.1">
    <property type="nucleotide sequence ID" value="NC_002488.3"/>
</dbReference>
<dbReference type="SMR" id="Q9PH02"/>
<dbReference type="STRING" id="160492.XF_0144"/>
<dbReference type="KEGG" id="xfa:XF_0144"/>
<dbReference type="eggNOG" id="COG1166">
    <property type="taxonomic scope" value="Bacteria"/>
</dbReference>
<dbReference type="HOGENOM" id="CLU_027243_1_0_6"/>
<dbReference type="Proteomes" id="UP000000812">
    <property type="component" value="Chromosome"/>
</dbReference>
<dbReference type="GO" id="GO:0008792">
    <property type="term" value="F:arginine decarboxylase activity"/>
    <property type="evidence" value="ECO:0007669"/>
    <property type="project" value="UniProtKB-UniRule"/>
</dbReference>
<dbReference type="GO" id="GO:0046872">
    <property type="term" value="F:metal ion binding"/>
    <property type="evidence" value="ECO:0007669"/>
    <property type="project" value="UniProtKB-KW"/>
</dbReference>
<dbReference type="GO" id="GO:0006527">
    <property type="term" value="P:arginine catabolic process"/>
    <property type="evidence" value="ECO:0007669"/>
    <property type="project" value="InterPro"/>
</dbReference>
<dbReference type="GO" id="GO:0033388">
    <property type="term" value="P:putrescine biosynthetic process from arginine"/>
    <property type="evidence" value="ECO:0007669"/>
    <property type="project" value="TreeGrafter"/>
</dbReference>
<dbReference type="GO" id="GO:0008295">
    <property type="term" value="P:spermidine biosynthetic process"/>
    <property type="evidence" value="ECO:0007669"/>
    <property type="project" value="UniProtKB-UniRule"/>
</dbReference>
<dbReference type="CDD" id="cd06830">
    <property type="entry name" value="PLPDE_III_ADC"/>
    <property type="match status" value="1"/>
</dbReference>
<dbReference type="FunFam" id="3.20.20.10:FF:000001">
    <property type="entry name" value="Biosynthetic arginine decarboxylase"/>
    <property type="match status" value="1"/>
</dbReference>
<dbReference type="Gene3D" id="1.10.287.3440">
    <property type="match status" value="1"/>
</dbReference>
<dbReference type="Gene3D" id="1.20.58.930">
    <property type="match status" value="1"/>
</dbReference>
<dbReference type="Gene3D" id="3.20.20.10">
    <property type="entry name" value="Alanine racemase"/>
    <property type="match status" value="1"/>
</dbReference>
<dbReference type="Gene3D" id="2.40.37.10">
    <property type="entry name" value="Lyase, Ornithine Decarboxylase, Chain A, domain 1"/>
    <property type="match status" value="1"/>
</dbReference>
<dbReference type="HAMAP" id="MF_01417">
    <property type="entry name" value="SpeA"/>
    <property type="match status" value="1"/>
</dbReference>
<dbReference type="InterPro" id="IPR009006">
    <property type="entry name" value="Ala_racemase/Decarboxylase_C"/>
</dbReference>
<dbReference type="InterPro" id="IPR040634">
    <property type="entry name" value="Arg_decarb_HB"/>
</dbReference>
<dbReference type="InterPro" id="IPR041128">
    <property type="entry name" value="Arg_decarbox_C"/>
</dbReference>
<dbReference type="InterPro" id="IPR002985">
    <property type="entry name" value="Arg_decrbxlase"/>
</dbReference>
<dbReference type="InterPro" id="IPR022657">
    <property type="entry name" value="De-COase2_CS"/>
</dbReference>
<dbReference type="InterPro" id="IPR022644">
    <property type="entry name" value="De-COase2_N"/>
</dbReference>
<dbReference type="InterPro" id="IPR000183">
    <property type="entry name" value="Orn/DAP/Arg_de-COase"/>
</dbReference>
<dbReference type="InterPro" id="IPR029066">
    <property type="entry name" value="PLP-binding_barrel"/>
</dbReference>
<dbReference type="NCBIfam" id="NF003763">
    <property type="entry name" value="PRK05354.1"/>
    <property type="match status" value="1"/>
</dbReference>
<dbReference type="NCBIfam" id="TIGR01273">
    <property type="entry name" value="speA"/>
    <property type="match status" value="1"/>
</dbReference>
<dbReference type="PANTHER" id="PTHR43295">
    <property type="entry name" value="ARGININE DECARBOXYLASE"/>
    <property type="match status" value="1"/>
</dbReference>
<dbReference type="PANTHER" id="PTHR43295:SF9">
    <property type="entry name" value="BIOSYNTHETIC ARGININE DECARBOXYLASE"/>
    <property type="match status" value="1"/>
</dbReference>
<dbReference type="Pfam" id="PF17810">
    <property type="entry name" value="Arg_decarb_HB"/>
    <property type="match status" value="1"/>
</dbReference>
<dbReference type="Pfam" id="PF17944">
    <property type="entry name" value="Arg_decarbox_C"/>
    <property type="match status" value="1"/>
</dbReference>
<dbReference type="Pfam" id="PF02784">
    <property type="entry name" value="Orn_Arg_deC_N"/>
    <property type="match status" value="1"/>
</dbReference>
<dbReference type="PIRSF" id="PIRSF001336">
    <property type="entry name" value="Arg_decrbxlase"/>
    <property type="match status" value="1"/>
</dbReference>
<dbReference type="PRINTS" id="PR01180">
    <property type="entry name" value="ARGDCRBXLASE"/>
</dbReference>
<dbReference type="PRINTS" id="PR01179">
    <property type="entry name" value="ODADCRBXLASE"/>
</dbReference>
<dbReference type="SUPFAM" id="SSF50621">
    <property type="entry name" value="Alanine racemase C-terminal domain-like"/>
    <property type="match status" value="1"/>
</dbReference>
<dbReference type="SUPFAM" id="SSF51419">
    <property type="entry name" value="PLP-binding barrel"/>
    <property type="match status" value="1"/>
</dbReference>
<dbReference type="PROSITE" id="PS00879">
    <property type="entry name" value="ODR_DC_2_2"/>
    <property type="match status" value="1"/>
</dbReference>
<feature type="chain" id="PRO_0000149989" description="Biosynthetic arginine decarboxylase">
    <location>
        <begin position="1"/>
        <end position="628"/>
    </location>
</feature>
<feature type="binding site" evidence="1">
    <location>
        <begin position="279"/>
        <end position="289"/>
    </location>
    <ligand>
        <name>substrate</name>
    </ligand>
</feature>
<feature type="modified residue" description="N6-(pyridoxal phosphate)lysine" evidence="1">
    <location>
        <position position="99"/>
    </location>
</feature>
<name>SPEA_XYLFA</name>
<evidence type="ECO:0000255" key="1">
    <source>
        <dbReference type="HAMAP-Rule" id="MF_01417"/>
    </source>
</evidence>
<organism>
    <name type="scientific">Xylella fastidiosa (strain 9a5c)</name>
    <dbReference type="NCBI Taxonomy" id="160492"/>
    <lineage>
        <taxon>Bacteria</taxon>
        <taxon>Pseudomonadati</taxon>
        <taxon>Pseudomonadota</taxon>
        <taxon>Gammaproteobacteria</taxon>
        <taxon>Lysobacterales</taxon>
        <taxon>Lysobacteraceae</taxon>
        <taxon>Xylella</taxon>
    </lineage>
</organism>
<gene>
    <name evidence="1" type="primary">speA</name>
    <name type="ordered locus">XF_0144</name>
</gene>